<evidence type="ECO:0000255" key="1">
    <source>
        <dbReference type="HAMAP-Rule" id="MF_00456"/>
    </source>
</evidence>
<protein>
    <recommendedName>
        <fullName evidence="1">Glutamate 5-kinase 1</fullName>
        <ecNumber evidence="1">2.7.2.11</ecNumber>
    </recommendedName>
    <alternativeName>
        <fullName evidence="1">Gamma-glutamyl kinase 1</fullName>
        <shortName evidence="1">GK 1</shortName>
    </alternativeName>
</protein>
<comment type="function">
    <text evidence="1">Catalyzes the transfer of a phosphate group to glutamate to form L-glutamate 5-phosphate.</text>
</comment>
<comment type="catalytic activity">
    <reaction evidence="1">
        <text>L-glutamate + ATP = L-glutamyl 5-phosphate + ADP</text>
        <dbReference type="Rhea" id="RHEA:14877"/>
        <dbReference type="ChEBI" id="CHEBI:29985"/>
        <dbReference type="ChEBI" id="CHEBI:30616"/>
        <dbReference type="ChEBI" id="CHEBI:58274"/>
        <dbReference type="ChEBI" id="CHEBI:456216"/>
        <dbReference type="EC" id="2.7.2.11"/>
    </reaction>
</comment>
<comment type="pathway">
    <text evidence="1">Amino-acid biosynthesis; L-proline biosynthesis; L-glutamate 5-semialdehyde from L-glutamate: step 1/2.</text>
</comment>
<comment type="subcellular location">
    <subcellularLocation>
        <location evidence="1">Cytoplasm</location>
    </subcellularLocation>
</comment>
<comment type="similarity">
    <text evidence="1">Belongs to the glutamate 5-kinase family.</text>
</comment>
<name>PROB1_RHIME</name>
<keyword id="KW-0028">Amino-acid biosynthesis</keyword>
<keyword id="KW-0067">ATP-binding</keyword>
<keyword id="KW-0963">Cytoplasm</keyword>
<keyword id="KW-0418">Kinase</keyword>
<keyword id="KW-0547">Nucleotide-binding</keyword>
<keyword id="KW-0641">Proline biosynthesis</keyword>
<keyword id="KW-1185">Reference proteome</keyword>
<keyword id="KW-0808">Transferase</keyword>
<reference key="1">
    <citation type="journal article" date="2001" name="Proc. Natl. Acad. Sci. U.S.A.">
        <title>Analysis of the chromosome sequence of the legume symbiont Sinorhizobium meliloti strain 1021.</title>
        <authorList>
            <person name="Capela D."/>
            <person name="Barloy-Hubler F."/>
            <person name="Gouzy J."/>
            <person name="Bothe G."/>
            <person name="Ampe F."/>
            <person name="Batut J."/>
            <person name="Boistard P."/>
            <person name="Becker A."/>
            <person name="Boutry M."/>
            <person name="Cadieu E."/>
            <person name="Dreano S."/>
            <person name="Gloux S."/>
            <person name="Godrie T."/>
            <person name="Goffeau A."/>
            <person name="Kahn D."/>
            <person name="Kiss E."/>
            <person name="Lelaure V."/>
            <person name="Masuy D."/>
            <person name="Pohl T."/>
            <person name="Portetelle D."/>
            <person name="Puehler A."/>
            <person name="Purnelle B."/>
            <person name="Ramsperger U."/>
            <person name="Renard C."/>
            <person name="Thebault P."/>
            <person name="Vandenbol M."/>
            <person name="Weidner S."/>
            <person name="Galibert F."/>
        </authorList>
    </citation>
    <scope>NUCLEOTIDE SEQUENCE [LARGE SCALE GENOMIC DNA]</scope>
    <source>
        <strain>1021</strain>
    </source>
</reference>
<reference key="2">
    <citation type="journal article" date="2001" name="Science">
        <title>The composite genome of the legume symbiont Sinorhizobium meliloti.</title>
        <authorList>
            <person name="Galibert F."/>
            <person name="Finan T.M."/>
            <person name="Long S.R."/>
            <person name="Puehler A."/>
            <person name="Abola P."/>
            <person name="Ampe F."/>
            <person name="Barloy-Hubler F."/>
            <person name="Barnett M.J."/>
            <person name="Becker A."/>
            <person name="Boistard P."/>
            <person name="Bothe G."/>
            <person name="Boutry M."/>
            <person name="Bowser L."/>
            <person name="Buhrmester J."/>
            <person name="Cadieu E."/>
            <person name="Capela D."/>
            <person name="Chain P."/>
            <person name="Cowie A."/>
            <person name="Davis R.W."/>
            <person name="Dreano S."/>
            <person name="Federspiel N.A."/>
            <person name="Fisher R.F."/>
            <person name="Gloux S."/>
            <person name="Godrie T."/>
            <person name="Goffeau A."/>
            <person name="Golding B."/>
            <person name="Gouzy J."/>
            <person name="Gurjal M."/>
            <person name="Hernandez-Lucas I."/>
            <person name="Hong A."/>
            <person name="Huizar L."/>
            <person name="Hyman R.W."/>
            <person name="Jones T."/>
            <person name="Kahn D."/>
            <person name="Kahn M.L."/>
            <person name="Kalman S."/>
            <person name="Keating D.H."/>
            <person name="Kiss E."/>
            <person name="Komp C."/>
            <person name="Lelaure V."/>
            <person name="Masuy D."/>
            <person name="Palm C."/>
            <person name="Peck M.C."/>
            <person name="Pohl T.M."/>
            <person name="Portetelle D."/>
            <person name="Purnelle B."/>
            <person name="Ramsperger U."/>
            <person name="Surzycki R."/>
            <person name="Thebault P."/>
            <person name="Vandenbol M."/>
            <person name="Vorhoelter F.J."/>
            <person name="Weidner S."/>
            <person name="Wells D.H."/>
            <person name="Wong K."/>
            <person name="Yeh K.-C."/>
            <person name="Batut J."/>
        </authorList>
    </citation>
    <scope>NUCLEOTIDE SEQUENCE [LARGE SCALE GENOMIC DNA]</scope>
    <source>
        <strain>1021</strain>
    </source>
</reference>
<proteinExistence type="inferred from homology"/>
<accession>Q92LB3</accession>
<sequence>MTKARKALENYRRVVIKIGSALLVDRRTGLKKSWLDALCADIAALRAKGVEVLVVSSGAIALGRTVLDLPAGALKLEESQAAAAVGQIVLARAWSESLSTHAIVAGQILLTLGDTEERRRYLNARATIGQLLKLGSVPIINENDTVATTEIRYGDNDRLAARVATMVGADLLVLLSDIDGLYTAPPHLDPNARFLETVAEITPEIEAMAGGAASELSRGGMRTKIDAGKIATTAGCAMIIASGKPDHPLAAIEAGARSSWFAPSGSPVTARKTWIAGQLLPAGSLSIDAGAETALRSGKSLLPAGVRQVTGSFSRGDTIAIIGASGREIARGLAGYDADEARQIAGKKSAEIAAILGYAGRTAMVHRDDLVMTAPSGARLVEESDEGKGKLHA</sequence>
<organism>
    <name type="scientific">Rhizobium meliloti (strain 1021)</name>
    <name type="common">Ensifer meliloti</name>
    <name type="synonym">Sinorhizobium meliloti</name>
    <dbReference type="NCBI Taxonomy" id="266834"/>
    <lineage>
        <taxon>Bacteria</taxon>
        <taxon>Pseudomonadati</taxon>
        <taxon>Pseudomonadota</taxon>
        <taxon>Alphaproteobacteria</taxon>
        <taxon>Hyphomicrobiales</taxon>
        <taxon>Rhizobiaceae</taxon>
        <taxon>Sinorhizobium/Ensifer group</taxon>
        <taxon>Sinorhizobium</taxon>
    </lineage>
</organism>
<gene>
    <name evidence="1" type="primary">proB1</name>
    <name type="ordered locus">R03160</name>
    <name type="ORF">SMc03776</name>
</gene>
<dbReference type="EC" id="2.7.2.11" evidence="1"/>
<dbReference type="EMBL" id="AL591688">
    <property type="protein sequence ID" value="CAC47739.1"/>
    <property type="molecule type" value="Genomic_DNA"/>
</dbReference>
<dbReference type="RefSeq" id="NP_387266.1">
    <property type="nucleotide sequence ID" value="NC_003047.1"/>
</dbReference>
<dbReference type="RefSeq" id="WP_010970464.1">
    <property type="nucleotide sequence ID" value="NC_003047.1"/>
</dbReference>
<dbReference type="SMR" id="Q92LB3"/>
<dbReference type="EnsemblBacteria" id="CAC47739">
    <property type="protein sequence ID" value="CAC47739"/>
    <property type="gene ID" value="SMc03776"/>
</dbReference>
<dbReference type="KEGG" id="sme:SMc03776"/>
<dbReference type="PATRIC" id="fig|266834.11.peg.4708"/>
<dbReference type="eggNOG" id="COG0263">
    <property type="taxonomic scope" value="Bacteria"/>
</dbReference>
<dbReference type="HOGENOM" id="CLU_025400_2_0_5"/>
<dbReference type="OrthoDB" id="9804434at2"/>
<dbReference type="UniPathway" id="UPA00098">
    <property type="reaction ID" value="UER00359"/>
</dbReference>
<dbReference type="Proteomes" id="UP000001976">
    <property type="component" value="Chromosome"/>
</dbReference>
<dbReference type="GO" id="GO:0005829">
    <property type="term" value="C:cytosol"/>
    <property type="evidence" value="ECO:0007669"/>
    <property type="project" value="TreeGrafter"/>
</dbReference>
<dbReference type="GO" id="GO:0005524">
    <property type="term" value="F:ATP binding"/>
    <property type="evidence" value="ECO:0007669"/>
    <property type="project" value="UniProtKB-KW"/>
</dbReference>
<dbReference type="GO" id="GO:0004349">
    <property type="term" value="F:glutamate 5-kinase activity"/>
    <property type="evidence" value="ECO:0007669"/>
    <property type="project" value="UniProtKB-UniRule"/>
</dbReference>
<dbReference type="GO" id="GO:0003723">
    <property type="term" value="F:RNA binding"/>
    <property type="evidence" value="ECO:0007669"/>
    <property type="project" value="InterPro"/>
</dbReference>
<dbReference type="GO" id="GO:0055129">
    <property type="term" value="P:L-proline biosynthetic process"/>
    <property type="evidence" value="ECO:0007669"/>
    <property type="project" value="UniProtKB-UniRule"/>
</dbReference>
<dbReference type="CDD" id="cd04242">
    <property type="entry name" value="AAK_G5K_ProB"/>
    <property type="match status" value="1"/>
</dbReference>
<dbReference type="CDD" id="cd21157">
    <property type="entry name" value="PUA_G5K"/>
    <property type="match status" value="1"/>
</dbReference>
<dbReference type="FunFam" id="2.30.130.10:FF:000007">
    <property type="entry name" value="Glutamate 5-kinase"/>
    <property type="match status" value="1"/>
</dbReference>
<dbReference type="FunFam" id="3.40.1160.10:FF:000018">
    <property type="entry name" value="Glutamate 5-kinase"/>
    <property type="match status" value="1"/>
</dbReference>
<dbReference type="Gene3D" id="3.40.1160.10">
    <property type="entry name" value="Acetylglutamate kinase-like"/>
    <property type="match status" value="1"/>
</dbReference>
<dbReference type="Gene3D" id="2.30.130.10">
    <property type="entry name" value="PUA domain"/>
    <property type="match status" value="1"/>
</dbReference>
<dbReference type="HAMAP" id="MF_00456">
    <property type="entry name" value="ProB"/>
    <property type="match status" value="1"/>
</dbReference>
<dbReference type="InterPro" id="IPR036393">
    <property type="entry name" value="AceGlu_kinase-like_sf"/>
</dbReference>
<dbReference type="InterPro" id="IPR001048">
    <property type="entry name" value="Asp/Glu/Uridylate_kinase"/>
</dbReference>
<dbReference type="InterPro" id="IPR041739">
    <property type="entry name" value="G5K_ProB"/>
</dbReference>
<dbReference type="InterPro" id="IPR001057">
    <property type="entry name" value="Glu/AcGlu_kinase"/>
</dbReference>
<dbReference type="InterPro" id="IPR011529">
    <property type="entry name" value="Glu_5kinase"/>
</dbReference>
<dbReference type="InterPro" id="IPR005715">
    <property type="entry name" value="Glu_5kinase/COase_Synthase"/>
</dbReference>
<dbReference type="InterPro" id="IPR019797">
    <property type="entry name" value="Glutamate_5-kinase_CS"/>
</dbReference>
<dbReference type="InterPro" id="IPR002478">
    <property type="entry name" value="PUA"/>
</dbReference>
<dbReference type="InterPro" id="IPR015947">
    <property type="entry name" value="PUA-like_sf"/>
</dbReference>
<dbReference type="InterPro" id="IPR036974">
    <property type="entry name" value="PUA_sf"/>
</dbReference>
<dbReference type="NCBIfam" id="TIGR01027">
    <property type="entry name" value="proB"/>
    <property type="match status" value="1"/>
</dbReference>
<dbReference type="PANTHER" id="PTHR43654">
    <property type="entry name" value="GLUTAMATE 5-KINASE"/>
    <property type="match status" value="1"/>
</dbReference>
<dbReference type="PANTHER" id="PTHR43654:SF1">
    <property type="entry name" value="ISOPENTENYL PHOSPHATE KINASE"/>
    <property type="match status" value="1"/>
</dbReference>
<dbReference type="Pfam" id="PF00696">
    <property type="entry name" value="AA_kinase"/>
    <property type="match status" value="1"/>
</dbReference>
<dbReference type="Pfam" id="PF01472">
    <property type="entry name" value="PUA"/>
    <property type="match status" value="1"/>
</dbReference>
<dbReference type="PIRSF" id="PIRSF000729">
    <property type="entry name" value="GK"/>
    <property type="match status" value="1"/>
</dbReference>
<dbReference type="PRINTS" id="PR00474">
    <property type="entry name" value="GLU5KINASE"/>
</dbReference>
<dbReference type="SMART" id="SM00359">
    <property type="entry name" value="PUA"/>
    <property type="match status" value="1"/>
</dbReference>
<dbReference type="SUPFAM" id="SSF53633">
    <property type="entry name" value="Carbamate kinase-like"/>
    <property type="match status" value="1"/>
</dbReference>
<dbReference type="SUPFAM" id="SSF88697">
    <property type="entry name" value="PUA domain-like"/>
    <property type="match status" value="1"/>
</dbReference>
<dbReference type="PROSITE" id="PS00902">
    <property type="entry name" value="GLUTAMATE_5_KINASE"/>
    <property type="match status" value="1"/>
</dbReference>
<dbReference type="PROSITE" id="PS50890">
    <property type="entry name" value="PUA"/>
    <property type="match status" value="1"/>
</dbReference>
<feature type="chain" id="PRO_0000109715" description="Glutamate 5-kinase 1">
    <location>
        <begin position="1"/>
        <end position="393"/>
    </location>
</feature>
<feature type="domain" description="PUA" evidence="1">
    <location>
        <begin position="282"/>
        <end position="359"/>
    </location>
</feature>
<feature type="binding site" evidence="1">
    <location>
        <position position="17"/>
    </location>
    <ligand>
        <name>ATP</name>
        <dbReference type="ChEBI" id="CHEBI:30616"/>
    </ligand>
</feature>
<feature type="binding site" evidence="1">
    <location>
        <position position="57"/>
    </location>
    <ligand>
        <name>substrate</name>
    </ligand>
</feature>
<feature type="binding site" evidence="1">
    <location>
        <position position="144"/>
    </location>
    <ligand>
        <name>substrate</name>
    </ligand>
</feature>
<feature type="binding site" evidence="1">
    <location>
        <position position="156"/>
    </location>
    <ligand>
        <name>substrate</name>
    </ligand>
</feature>
<feature type="binding site" evidence="1">
    <location>
        <begin position="176"/>
        <end position="177"/>
    </location>
    <ligand>
        <name>ATP</name>
        <dbReference type="ChEBI" id="CHEBI:30616"/>
    </ligand>
</feature>